<gene>
    <name evidence="1" type="primary">NP</name>
</gene>
<feature type="chain" id="PRO_0000309849" description="Nucleoprotein">
    <location>
        <begin position="1"/>
        <end position="498"/>
    </location>
</feature>
<feature type="region of interest" description="Disordered" evidence="2">
    <location>
        <begin position="1"/>
        <end position="21"/>
    </location>
</feature>
<feature type="short sequence motif" description="Unconventional nuclear localization signal" evidence="1">
    <location>
        <begin position="1"/>
        <end position="18"/>
    </location>
</feature>
<feature type="short sequence motif" description="Bipartite nuclear localization signal" evidence="1">
    <location>
        <begin position="198"/>
        <end position="216"/>
    </location>
</feature>
<protein>
    <recommendedName>
        <fullName evidence="1">Nucleoprotein</fullName>
    </recommendedName>
    <alternativeName>
        <fullName evidence="1">Nucleocapsid protein</fullName>
        <shortName evidence="1">Protein N</shortName>
    </alternativeName>
</protein>
<accession>Q0A2H2</accession>
<organism>
    <name type="scientific">Influenza A virus (strain A/Chicken/Scotland/1959 H5N1)</name>
    <dbReference type="NCBI Taxonomy" id="402527"/>
    <lineage>
        <taxon>Viruses</taxon>
        <taxon>Riboviria</taxon>
        <taxon>Orthornavirae</taxon>
        <taxon>Negarnaviricota</taxon>
        <taxon>Polyploviricotina</taxon>
        <taxon>Insthoviricetes</taxon>
        <taxon>Articulavirales</taxon>
        <taxon>Orthomyxoviridae</taxon>
        <taxon>Alphainfluenzavirus</taxon>
        <taxon>Alphainfluenzavirus influenzae</taxon>
        <taxon>Influenza A virus</taxon>
    </lineage>
</organism>
<dbReference type="EMBL" id="CY015084">
    <property type="protein sequence ID" value="ABI85110.1"/>
    <property type="molecule type" value="Genomic_RNA"/>
</dbReference>
<dbReference type="SMR" id="Q0A2H2"/>
<dbReference type="PRO" id="PR:Q0A2H2"/>
<dbReference type="Proteomes" id="UP000169634">
    <property type="component" value="Genome"/>
</dbReference>
<dbReference type="GO" id="GO:0019029">
    <property type="term" value="C:helical viral capsid"/>
    <property type="evidence" value="ECO:0007669"/>
    <property type="project" value="UniProtKB-UniRule"/>
</dbReference>
<dbReference type="GO" id="GO:0043657">
    <property type="term" value="C:host cell"/>
    <property type="evidence" value="ECO:0007669"/>
    <property type="project" value="GOC"/>
</dbReference>
<dbReference type="GO" id="GO:0042025">
    <property type="term" value="C:host cell nucleus"/>
    <property type="evidence" value="ECO:0007669"/>
    <property type="project" value="UniProtKB-SubCell"/>
</dbReference>
<dbReference type="GO" id="GO:1990904">
    <property type="term" value="C:ribonucleoprotein complex"/>
    <property type="evidence" value="ECO:0007669"/>
    <property type="project" value="UniProtKB-KW"/>
</dbReference>
<dbReference type="GO" id="GO:0019013">
    <property type="term" value="C:viral nucleocapsid"/>
    <property type="evidence" value="ECO:0007669"/>
    <property type="project" value="UniProtKB-UniRule"/>
</dbReference>
<dbReference type="GO" id="GO:0003723">
    <property type="term" value="F:RNA binding"/>
    <property type="evidence" value="ECO:0007669"/>
    <property type="project" value="UniProtKB-UniRule"/>
</dbReference>
<dbReference type="GO" id="GO:0005198">
    <property type="term" value="F:structural molecule activity"/>
    <property type="evidence" value="ECO:0007669"/>
    <property type="project" value="UniProtKB-UniRule"/>
</dbReference>
<dbReference type="GO" id="GO:0046718">
    <property type="term" value="P:symbiont entry into host cell"/>
    <property type="evidence" value="ECO:0007669"/>
    <property type="project" value="UniProtKB-KW"/>
</dbReference>
<dbReference type="GO" id="GO:0075732">
    <property type="term" value="P:viral penetration into host nucleus"/>
    <property type="evidence" value="ECO:0007669"/>
    <property type="project" value="UniProtKB-UniRule"/>
</dbReference>
<dbReference type="HAMAP" id="MF_04070">
    <property type="entry name" value="INFV_NCAP"/>
    <property type="match status" value="1"/>
</dbReference>
<dbReference type="InterPro" id="IPR002141">
    <property type="entry name" value="Flu_NP"/>
</dbReference>
<dbReference type="Pfam" id="PF00506">
    <property type="entry name" value="Flu_NP"/>
    <property type="match status" value="1"/>
</dbReference>
<dbReference type="SUPFAM" id="SSF161003">
    <property type="entry name" value="flu NP-like"/>
    <property type="match status" value="1"/>
</dbReference>
<comment type="function">
    <text evidence="1">Encapsidates the negative strand viral RNA, protecting it from nucleases. The encapsidated genomic RNA is termed the ribonucleoprotein (RNP) and serves as template for transcription and replication. The RNP needs to be localized in the host nucleus to start an infectious cycle, but is too large to diffuse through the nuclear pore complex. NP comprises at least 2 nuclear localization signals that are responsible for the active RNP import into the nucleus through cellular importin alpha/beta pathway. Later in the infection, nclear export of RNPs are mediated through viral proteins NEP interacting with M1 which binds nucleoproteins. It is possible that nucleoprotein binds directly host exportin-1/XPO1 and plays an active role in RNPs nuclear export. M1 interaction with RNP seems to hide nucleoprotein's nuclear localization signals. Soon after a virion infects a new cell, M1 dissociates from the RNP under acidification of the virion driven by M2 protein. Dissociation of M1 from RNP unmasks nucleoprotein's nuclear localization signals, targeting the RNP to the nucleus.</text>
</comment>
<comment type="subunit">
    <text evidence="1">Homomultimerizes to form the nucleocapsid. May bind host exportin-1/XPO1. Binds to viral genomic RNA. Protein-RNA contacts are mediated by a combination of electrostatic interactions between positively charged residues and the phosphate backbone and planar interactions between aromatic side chains and bases.</text>
</comment>
<comment type="subcellular location">
    <subcellularLocation>
        <location evidence="1">Virion</location>
    </subcellularLocation>
    <subcellularLocation>
        <location evidence="1">Host nucleus</location>
    </subcellularLocation>
</comment>
<comment type="PTM">
    <text evidence="1">Late in virus-infected cells, may be cleaved from a 56-kDa protein to a 53-kDa protein by a cellular caspase. This cleavage might be a marker for the onset of apoptosis in infected cells or have a specific function in virus host interaction.</text>
</comment>
<comment type="similarity">
    <text evidence="1">Belongs to the influenza viruses nucleoprotein family.</text>
</comment>
<proteinExistence type="inferred from homology"/>
<reference key="1">
    <citation type="journal article" date="2006" name="Science">
        <title>Large-scale sequence analysis of avian influenza isolates.</title>
        <authorList>
            <person name="Obenauer J.C."/>
            <person name="Denson J."/>
            <person name="Mehta P.K."/>
            <person name="Su X."/>
            <person name="Mukatira S."/>
            <person name="Finkelstein D.B."/>
            <person name="Xu X."/>
            <person name="Wang J."/>
            <person name="Ma J."/>
            <person name="Fan Y."/>
            <person name="Rakestraw K.M."/>
            <person name="Webster R.G."/>
            <person name="Hoffmann E."/>
            <person name="Krauss S."/>
            <person name="Zheng J."/>
            <person name="Zhang Z."/>
            <person name="Naeve C.W."/>
        </authorList>
    </citation>
    <scope>NUCLEOTIDE SEQUENCE [GENOMIC RNA]</scope>
</reference>
<keyword id="KW-0167">Capsid protein</keyword>
<keyword id="KW-1139">Helical capsid protein</keyword>
<keyword id="KW-1048">Host nucleus</keyword>
<keyword id="KW-0945">Host-virus interaction</keyword>
<keyword id="KW-0687">Ribonucleoprotein</keyword>
<keyword id="KW-0694">RNA-binding</keyword>
<keyword id="KW-0543">Viral nucleoprotein</keyword>
<keyword id="KW-1163">Viral penetration into host nucleus</keyword>
<keyword id="KW-0946">Virion</keyword>
<keyword id="KW-1160">Virus entry into host cell</keyword>
<evidence type="ECO:0000255" key="1">
    <source>
        <dbReference type="HAMAP-Rule" id="MF_04070"/>
    </source>
</evidence>
<evidence type="ECO:0000256" key="2">
    <source>
        <dbReference type="SAM" id="MobiDB-lite"/>
    </source>
</evidence>
<organismHost>
    <name type="scientific">Aves</name>
    <dbReference type="NCBI Taxonomy" id="8782"/>
</organismHost>
<organismHost>
    <name type="scientific">Felis catus</name>
    <name type="common">Cat</name>
    <name type="synonym">Felis silvestris catus</name>
    <dbReference type="NCBI Taxonomy" id="9685"/>
</organismHost>
<organismHost>
    <name type="scientific">Homo sapiens</name>
    <name type="common">Human</name>
    <dbReference type="NCBI Taxonomy" id="9606"/>
</organismHost>
<organismHost>
    <name type="scientific">Panthera pardus</name>
    <name type="common">Leopard</name>
    <name type="synonym">Felis pardus</name>
    <dbReference type="NCBI Taxonomy" id="9691"/>
</organismHost>
<organismHost>
    <name type="scientific">Panthera tigris</name>
    <name type="common">Tiger</name>
    <dbReference type="NCBI Taxonomy" id="9694"/>
</organismHost>
<organismHost>
    <name type="scientific">Sus scrofa</name>
    <name type="common">Pig</name>
    <dbReference type="NCBI Taxonomy" id="9823"/>
</organismHost>
<sequence>MASQGTKRSYEQMETGGDRQNATEIRASVGRMVGGIGRFYIQMCTELKLSDYEGRLIQNSITIERMVLSAFDERRNRYLEEHPSAGKDPKKTGGPIYRRRNGKWVRELILYDKEEIRRIWRQANNGEDATAGLTHLMIWHSNLNDATYQRTRALVRTGMDPRMCSLMQGSTLPRRSGAAGAAVKGVGTMVMELIRMIKRGINDRNFWRGENGRRTRIAYERMCNILKGKFQTAAQRAMMDQVRESRNPGNAEIEDLIFLARSALILRGSVAHKSCLPACVYGLAVASGYDFEREGYSLVGIDPFRLLQNSQVFSLIRPNENPAHKSQLVWMACHSAAFEDLRVSSFIRGTRVVPRGQLSTRGVQIASNENMETMDSSTLELRSKYWAIRTRSGGNTNQQRASAGQISVQPTFSVQRNLPFERATIMAAFTGNTEGRTSDMRTEIIRMMESARPEDVSFQGRGVFELSDEKATNPIVPSFDMSNEGSYFFGDNAEEYDN</sequence>
<name>NCAP_I59A0</name>